<proteinExistence type="inferred from homology"/>
<reference key="1">
    <citation type="journal article" date="1997" name="Nature">
        <title>Endemic African mammals shake the phylogenetic tree.</title>
        <authorList>
            <person name="Springer M.S."/>
            <person name="Cleven G.C."/>
            <person name="Madsen O.J."/>
            <person name="de Jong W.W."/>
            <person name="Waddell V.G."/>
            <person name="Amrine H.M."/>
            <person name="Stanhope M.J."/>
        </authorList>
    </citation>
    <scope>NUCLEOTIDE SEQUENCE [GENOMIC DNA]</scope>
</reference>
<feature type="chain" id="PRO_0000069101" description="Alpha-2B adrenergic receptor">
    <location>
        <begin position="1" status="less than"/>
        <end position="397" status="greater than"/>
    </location>
</feature>
<feature type="transmembrane region" description="Helical; Name=1" evidence="1">
    <location>
        <begin position="1" status="less than"/>
        <end position="25"/>
    </location>
</feature>
<feature type="topological domain" description="Cytoplasmic" evidence="1">
    <location>
        <begin position="26"/>
        <end position="36"/>
    </location>
</feature>
<feature type="transmembrane region" description="Helical; Name=2" evidence="1">
    <location>
        <begin position="37"/>
        <end position="62"/>
    </location>
</feature>
<feature type="topological domain" description="Extracellular" evidence="1">
    <location>
        <begin position="63"/>
        <end position="72"/>
    </location>
</feature>
<feature type="transmembrane region" description="Helical; Name=3" evidence="1">
    <location>
        <begin position="73"/>
        <end position="95"/>
    </location>
</feature>
<feature type="topological domain" description="Cytoplasmic" evidence="1">
    <location>
        <begin position="96"/>
        <end position="117"/>
    </location>
</feature>
<feature type="transmembrane region" description="Helical; Name=4" evidence="1">
    <location>
        <begin position="118"/>
        <end position="140"/>
    </location>
</feature>
<feature type="topological domain" description="Extracellular" evidence="1">
    <location>
        <begin position="141"/>
        <end position="156"/>
    </location>
</feature>
<feature type="transmembrane region" description="Helical; Name=5" evidence="1">
    <location>
        <begin position="157"/>
        <end position="180"/>
    </location>
</feature>
<feature type="topological domain" description="Cytoplasmic" evidence="1">
    <location>
        <begin position="181"/>
        <end position="361"/>
    </location>
</feature>
<feature type="transmembrane region" description="Helical; Name=6" evidence="1">
    <location>
        <begin position="362"/>
        <end position="385"/>
    </location>
</feature>
<feature type="topological domain" description="Extracellular" evidence="1">
    <location>
        <begin position="386"/>
        <end position="394"/>
    </location>
</feature>
<feature type="transmembrane region" description="Helical; Name=7" evidence="1">
    <location>
        <begin position="395"/>
        <end position="397" status="greater than"/>
    </location>
</feature>
<feature type="region of interest" description="Disordered" evidence="4">
    <location>
        <begin position="193"/>
        <end position="212"/>
    </location>
</feature>
<feature type="region of interest" description="Disordered" evidence="4">
    <location>
        <begin position="230"/>
        <end position="319"/>
    </location>
</feature>
<feature type="compositionally biased region" description="Acidic residues" evidence="4">
    <location>
        <begin position="280"/>
        <end position="300"/>
    </location>
</feature>
<feature type="compositionally biased region" description="Low complexity" evidence="4">
    <location>
        <begin position="301"/>
        <end position="319"/>
    </location>
</feature>
<feature type="site" description="Implicated in ligand binding" evidence="1">
    <location>
        <position position="79"/>
    </location>
</feature>
<feature type="site" description="Implicated in catechol agonist binding" evidence="1">
    <location>
        <position position="163"/>
    </location>
</feature>
<feature type="site" description="Implicated in catechol agonist binding" evidence="1">
    <location>
        <position position="167"/>
    </location>
</feature>
<feature type="disulfide bond" evidence="3">
    <location>
        <begin position="72"/>
        <end position="151"/>
    </location>
</feature>
<feature type="non-terminal residue">
    <location>
        <position position="1"/>
    </location>
</feature>
<feature type="non-terminal residue">
    <location>
        <position position="397"/>
    </location>
</feature>
<keyword id="KW-1003">Cell membrane</keyword>
<keyword id="KW-1015">Disulfide bond</keyword>
<keyword id="KW-0297">G-protein coupled receptor</keyword>
<keyword id="KW-0449">Lipoprotein</keyword>
<keyword id="KW-0472">Membrane</keyword>
<keyword id="KW-0564">Palmitate</keyword>
<keyword id="KW-0675">Receptor</keyword>
<keyword id="KW-0807">Transducer</keyword>
<keyword id="KW-0812">Transmembrane</keyword>
<keyword id="KW-1133">Transmembrane helix</keyword>
<evidence type="ECO:0000250" key="1"/>
<evidence type="ECO:0000250" key="2">
    <source>
        <dbReference type="UniProtKB" id="P18089"/>
    </source>
</evidence>
<evidence type="ECO:0000255" key="3">
    <source>
        <dbReference type="PROSITE-ProRule" id="PRU00521"/>
    </source>
</evidence>
<evidence type="ECO:0000256" key="4">
    <source>
        <dbReference type="SAM" id="MobiDB-lite"/>
    </source>
</evidence>
<accession>O19091</accession>
<comment type="function">
    <text>Alpha-2 adrenergic receptors mediate the catecholamine-induced inhibition of adenylate cyclase through the action of G proteins.</text>
</comment>
<comment type="subunit">
    <text evidence="2">Interacts with RAB26. Interacts with PPP1R9B.</text>
</comment>
<comment type="subcellular location">
    <subcellularLocation>
        <location>Cell membrane</location>
        <topology>Multi-pass membrane protein</topology>
    </subcellularLocation>
</comment>
<comment type="similarity">
    <text evidence="3">Belongs to the G-protein coupled receptor 1 family. Adrenergic receptor subfamily. ADRA2B sub-subfamily.</text>
</comment>
<name>ADA2B_TALEU</name>
<gene>
    <name type="primary">ADRA2B</name>
</gene>
<sequence>AIAAIIIFLILFTIFGNALVILAVLTSRSLRAPQNLFLVSLAAADILVATLIIPFSLANELLGYWYFRRMWCKVYLALDVLFCTSSIVHLCAISLDRYWAVSRALEYNSKRTPRRIKCIILMVWLIAAVISLPSLVYKGDQGPQPSGAPQCNLNQETWYILASSIGSFFAPCLIMILVYLRIYLIAKRSHCRGPRAKGAPGKSKFKQSRQVPGGTLASAKVPNLAAHLVAAGETNGRSKPTGEKEMGETPEDSGTSTLPPSWPALPNSGQDQKEGICEASLEEEAEEEEEGEEEREEECEPQALPASPASACSPPLQQPQGSQVLATLRGQVLLGRAAGAASGQWWRRRTQLSREKRFTFVLAVVIGVFVLCWFPFFFSYSLGAICPQQCKVPHDLF</sequence>
<dbReference type="EMBL" id="Y12520">
    <property type="protein sequence ID" value="CAA73120.1"/>
    <property type="molecule type" value="Genomic_DNA"/>
</dbReference>
<dbReference type="SMR" id="O19091"/>
<dbReference type="GO" id="GO:0005886">
    <property type="term" value="C:plasma membrane"/>
    <property type="evidence" value="ECO:0007669"/>
    <property type="project" value="UniProtKB-SubCell"/>
</dbReference>
<dbReference type="GO" id="GO:0004938">
    <property type="term" value="F:alpha2-adrenergic receptor activity"/>
    <property type="evidence" value="ECO:0007669"/>
    <property type="project" value="InterPro"/>
</dbReference>
<dbReference type="GO" id="GO:0051379">
    <property type="term" value="F:epinephrine binding"/>
    <property type="evidence" value="ECO:0007669"/>
    <property type="project" value="TreeGrafter"/>
</dbReference>
<dbReference type="GO" id="GO:0030168">
    <property type="term" value="P:platelet activation"/>
    <property type="evidence" value="ECO:0007669"/>
    <property type="project" value="InterPro"/>
</dbReference>
<dbReference type="GO" id="GO:0006940">
    <property type="term" value="P:regulation of smooth muscle contraction"/>
    <property type="evidence" value="ECO:0007669"/>
    <property type="project" value="InterPro"/>
</dbReference>
<dbReference type="GO" id="GO:0019229">
    <property type="term" value="P:regulation of vasoconstriction"/>
    <property type="evidence" value="ECO:0007669"/>
    <property type="project" value="InterPro"/>
</dbReference>
<dbReference type="FunFam" id="1.20.1070.10:FF:000330">
    <property type="entry name" value="Alpha 2B adrenergic receptor"/>
    <property type="match status" value="1"/>
</dbReference>
<dbReference type="FunFam" id="1.20.1070.10:FF:000185">
    <property type="entry name" value="Alpha-2B adrenergic receptor"/>
    <property type="match status" value="1"/>
</dbReference>
<dbReference type="Gene3D" id="1.20.1070.10">
    <property type="entry name" value="Rhodopsin 7-helix transmembrane proteins"/>
    <property type="match status" value="2"/>
</dbReference>
<dbReference type="InterPro" id="IPR002233">
    <property type="entry name" value="ADR_fam"/>
</dbReference>
<dbReference type="InterPro" id="IPR000207">
    <property type="entry name" value="ADRA2B_rcpt"/>
</dbReference>
<dbReference type="InterPro" id="IPR000276">
    <property type="entry name" value="GPCR_Rhodpsn"/>
</dbReference>
<dbReference type="InterPro" id="IPR017452">
    <property type="entry name" value="GPCR_Rhodpsn_7TM"/>
</dbReference>
<dbReference type="PANTHER" id="PTHR24248">
    <property type="entry name" value="ADRENERGIC RECEPTOR-RELATED G-PROTEIN COUPLED RECEPTOR"/>
    <property type="match status" value="1"/>
</dbReference>
<dbReference type="PANTHER" id="PTHR24248:SF130">
    <property type="entry name" value="ALPHA-2B ADRENERGIC RECEPTOR"/>
    <property type="match status" value="1"/>
</dbReference>
<dbReference type="Pfam" id="PF00001">
    <property type="entry name" value="7tm_1"/>
    <property type="match status" value="1"/>
</dbReference>
<dbReference type="PRINTS" id="PR01103">
    <property type="entry name" value="ADRENERGICR"/>
</dbReference>
<dbReference type="PRINTS" id="PR00559">
    <property type="entry name" value="ADRENRGCA2BR"/>
</dbReference>
<dbReference type="PRINTS" id="PR00237">
    <property type="entry name" value="GPCRRHODOPSN"/>
</dbReference>
<dbReference type="SUPFAM" id="SSF81321">
    <property type="entry name" value="Family A G protein-coupled receptor-like"/>
    <property type="match status" value="1"/>
</dbReference>
<dbReference type="PROSITE" id="PS00237">
    <property type="entry name" value="G_PROTEIN_RECEP_F1_1"/>
    <property type="match status" value="1"/>
</dbReference>
<dbReference type="PROSITE" id="PS50262">
    <property type="entry name" value="G_PROTEIN_RECEP_F1_2"/>
    <property type="match status" value="1"/>
</dbReference>
<organism>
    <name type="scientific">Talpa europaea</name>
    <name type="common">European mole</name>
    <dbReference type="NCBI Taxonomy" id="9375"/>
    <lineage>
        <taxon>Eukaryota</taxon>
        <taxon>Metazoa</taxon>
        <taxon>Chordata</taxon>
        <taxon>Craniata</taxon>
        <taxon>Vertebrata</taxon>
        <taxon>Euteleostomi</taxon>
        <taxon>Mammalia</taxon>
        <taxon>Eutheria</taxon>
        <taxon>Laurasiatheria</taxon>
        <taxon>Eulipotyphla</taxon>
        <taxon>Talpidae</taxon>
        <taxon>Talpa</taxon>
    </lineage>
</organism>
<protein>
    <recommendedName>
        <fullName>Alpha-2B adrenergic receptor</fullName>
    </recommendedName>
    <alternativeName>
        <fullName>Alpha-2B adrenoreceptor</fullName>
        <shortName>Alpha-2B adrenoceptor</shortName>
        <shortName>Alpha-2BAR</shortName>
    </alternativeName>
</protein>